<proteinExistence type="evidence at protein level"/>
<reference key="1">
    <citation type="journal article" date="2002" name="Mol. Cell. Biol.">
        <title>A sperm-associated WD repeat protein orthologous to Chlamydomonas PF20 associates with Spag6, the mammalian orthologue of Chlamydomonas PF16.</title>
        <authorList>
            <person name="Zhang Z."/>
            <person name="Sapiro R."/>
            <person name="Kapfhamer D."/>
            <person name="Bucan M."/>
            <person name="Bray J."/>
            <person name="Chennathukuzhi V."/>
            <person name="McNamara P."/>
            <person name="Curtis A."/>
            <person name="Zhang M."/>
            <person name="Blanchette-Mackie E.J."/>
            <person name="Strauss J.F. III"/>
        </authorList>
    </citation>
    <scope>NUCLEOTIDE SEQUENCE [MRNA] (ISOFORM 1)</scope>
    <scope>SUBCELLULAR LOCATION</scope>
    <scope>INTERACTION WITH SPAG6</scope>
    <scope>TISSUE SPECIFICITY</scope>
    <source>
        <strain>CD-1</strain>
        <tissue>Testis</tissue>
    </source>
</reference>
<reference key="2">
    <citation type="journal article" date="2005" name="Science">
        <title>The transcriptional landscape of the mammalian genome.</title>
        <authorList>
            <person name="Carninci P."/>
            <person name="Kasukawa T."/>
            <person name="Katayama S."/>
            <person name="Gough J."/>
            <person name="Frith M.C."/>
            <person name="Maeda N."/>
            <person name="Oyama R."/>
            <person name="Ravasi T."/>
            <person name="Lenhard B."/>
            <person name="Wells C."/>
            <person name="Kodzius R."/>
            <person name="Shimokawa K."/>
            <person name="Bajic V.B."/>
            <person name="Brenner S.E."/>
            <person name="Batalov S."/>
            <person name="Forrest A.R."/>
            <person name="Zavolan M."/>
            <person name="Davis M.J."/>
            <person name="Wilming L.G."/>
            <person name="Aidinis V."/>
            <person name="Allen J.E."/>
            <person name="Ambesi-Impiombato A."/>
            <person name="Apweiler R."/>
            <person name="Aturaliya R.N."/>
            <person name="Bailey T.L."/>
            <person name="Bansal M."/>
            <person name="Baxter L."/>
            <person name="Beisel K.W."/>
            <person name="Bersano T."/>
            <person name="Bono H."/>
            <person name="Chalk A.M."/>
            <person name="Chiu K.P."/>
            <person name="Choudhary V."/>
            <person name="Christoffels A."/>
            <person name="Clutterbuck D.R."/>
            <person name="Crowe M.L."/>
            <person name="Dalla E."/>
            <person name="Dalrymple B.P."/>
            <person name="de Bono B."/>
            <person name="Della Gatta G."/>
            <person name="di Bernardo D."/>
            <person name="Down T."/>
            <person name="Engstrom P."/>
            <person name="Fagiolini M."/>
            <person name="Faulkner G."/>
            <person name="Fletcher C.F."/>
            <person name="Fukushima T."/>
            <person name="Furuno M."/>
            <person name="Futaki S."/>
            <person name="Gariboldi M."/>
            <person name="Georgii-Hemming P."/>
            <person name="Gingeras T.R."/>
            <person name="Gojobori T."/>
            <person name="Green R.E."/>
            <person name="Gustincich S."/>
            <person name="Harbers M."/>
            <person name="Hayashi Y."/>
            <person name="Hensch T.K."/>
            <person name="Hirokawa N."/>
            <person name="Hill D."/>
            <person name="Huminiecki L."/>
            <person name="Iacono M."/>
            <person name="Ikeo K."/>
            <person name="Iwama A."/>
            <person name="Ishikawa T."/>
            <person name="Jakt M."/>
            <person name="Kanapin A."/>
            <person name="Katoh M."/>
            <person name="Kawasawa Y."/>
            <person name="Kelso J."/>
            <person name="Kitamura H."/>
            <person name="Kitano H."/>
            <person name="Kollias G."/>
            <person name="Krishnan S.P."/>
            <person name="Kruger A."/>
            <person name="Kummerfeld S.K."/>
            <person name="Kurochkin I.V."/>
            <person name="Lareau L.F."/>
            <person name="Lazarevic D."/>
            <person name="Lipovich L."/>
            <person name="Liu J."/>
            <person name="Liuni S."/>
            <person name="McWilliam S."/>
            <person name="Madan Babu M."/>
            <person name="Madera M."/>
            <person name="Marchionni L."/>
            <person name="Matsuda H."/>
            <person name="Matsuzawa S."/>
            <person name="Miki H."/>
            <person name="Mignone F."/>
            <person name="Miyake S."/>
            <person name="Morris K."/>
            <person name="Mottagui-Tabar S."/>
            <person name="Mulder N."/>
            <person name="Nakano N."/>
            <person name="Nakauchi H."/>
            <person name="Ng P."/>
            <person name="Nilsson R."/>
            <person name="Nishiguchi S."/>
            <person name="Nishikawa S."/>
            <person name="Nori F."/>
            <person name="Ohara O."/>
            <person name="Okazaki Y."/>
            <person name="Orlando V."/>
            <person name="Pang K.C."/>
            <person name="Pavan W.J."/>
            <person name="Pavesi G."/>
            <person name="Pesole G."/>
            <person name="Petrovsky N."/>
            <person name="Piazza S."/>
            <person name="Reed J."/>
            <person name="Reid J.F."/>
            <person name="Ring B.Z."/>
            <person name="Ringwald M."/>
            <person name="Rost B."/>
            <person name="Ruan Y."/>
            <person name="Salzberg S.L."/>
            <person name="Sandelin A."/>
            <person name="Schneider C."/>
            <person name="Schoenbach C."/>
            <person name="Sekiguchi K."/>
            <person name="Semple C.A."/>
            <person name="Seno S."/>
            <person name="Sessa L."/>
            <person name="Sheng Y."/>
            <person name="Shibata Y."/>
            <person name="Shimada H."/>
            <person name="Shimada K."/>
            <person name="Silva D."/>
            <person name="Sinclair B."/>
            <person name="Sperling S."/>
            <person name="Stupka E."/>
            <person name="Sugiura K."/>
            <person name="Sultana R."/>
            <person name="Takenaka Y."/>
            <person name="Taki K."/>
            <person name="Tammoja K."/>
            <person name="Tan S.L."/>
            <person name="Tang S."/>
            <person name="Taylor M.S."/>
            <person name="Tegner J."/>
            <person name="Teichmann S.A."/>
            <person name="Ueda H.R."/>
            <person name="van Nimwegen E."/>
            <person name="Verardo R."/>
            <person name="Wei C.L."/>
            <person name="Yagi K."/>
            <person name="Yamanishi H."/>
            <person name="Zabarovsky E."/>
            <person name="Zhu S."/>
            <person name="Zimmer A."/>
            <person name="Hide W."/>
            <person name="Bult C."/>
            <person name="Grimmond S.M."/>
            <person name="Teasdale R.D."/>
            <person name="Liu E.T."/>
            <person name="Brusic V."/>
            <person name="Quackenbush J."/>
            <person name="Wahlestedt C."/>
            <person name="Mattick J.S."/>
            <person name="Hume D.A."/>
            <person name="Kai C."/>
            <person name="Sasaki D."/>
            <person name="Tomaru Y."/>
            <person name="Fukuda S."/>
            <person name="Kanamori-Katayama M."/>
            <person name="Suzuki M."/>
            <person name="Aoki J."/>
            <person name="Arakawa T."/>
            <person name="Iida J."/>
            <person name="Imamura K."/>
            <person name="Itoh M."/>
            <person name="Kato T."/>
            <person name="Kawaji H."/>
            <person name="Kawagashira N."/>
            <person name="Kawashima T."/>
            <person name="Kojima M."/>
            <person name="Kondo S."/>
            <person name="Konno H."/>
            <person name="Nakano K."/>
            <person name="Ninomiya N."/>
            <person name="Nishio T."/>
            <person name="Okada M."/>
            <person name="Plessy C."/>
            <person name="Shibata K."/>
            <person name="Shiraki T."/>
            <person name="Suzuki S."/>
            <person name="Tagami M."/>
            <person name="Waki K."/>
            <person name="Watahiki A."/>
            <person name="Okamura-Oho Y."/>
            <person name="Suzuki H."/>
            <person name="Kawai J."/>
            <person name="Hayashizaki Y."/>
        </authorList>
    </citation>
    <scope>NUCLEOTIDE SEQUENCE [LARGE SCALE MRNA] (ISOFORMS 2; 3 AND 4)</scope>
    <source>
        <strain>C57BL/6J</strain>
        <tissue>Spinal cord</tissue>
        <tissue>Testis</tissue>
    </source>
</reference>
<reference key="3">
    <citation type="journal article" date="2004" name="Genome Res.">
        <title>The status, quality, and expansion of the NIH full-length cDNA project: the Mammalian Gene Collection (MGC).</title>
        <authorList>
            <consortium name="The MGC Project Team"/>
        </authorList>
    </citation>
    <scope>NUCLEOTIDE SEQUENCE [LARGE SCALE MRNA] (ISOFORM 2)</scope>
    <source>
        <tissue>Brain</tissue>
    </source>
</reference>
<reference key="4">
    <citation type="journal article" date="2008" name="Biol. Reprod.">
        <title>Phosphorylation of mouse sperm axoneme central apparatus protein SPAG16L by a testis-specific kinase, TSSK2.</title>
        <authorList>
            <person name="Zhang Z."/>
            <person name="Shen X."/>
            <person name="Jones B.H."/>
            <person name="Xu B."/>
            <person name="Herr J.C."/>
            <person name="Strauss J.F. III"/>
        </authorList>
    </citation>
    <scope>PHOSPHORYLATION</scope>
</reference>
<reference key="5">
    <citation type="journal article" date="2009" name="Nature">
        <title>Fused has evolved divergent roles in vertebrate Hedgehog signalling and motile ciliogenesis.</title>
        <authorList>
            <person name="Wilson C.W."/>
            <person name="Nguyen C.T."/>
            <person name="Chen M.H."/>
            <person name="Yang J.H."/>
            <person name="Gacayan R."/>
            <person name="Huang J."/>
            <person name="Chen J.N."/>
            <person name="Chuang P.T."/>
        </authorList>
    </citation>
    <scope>FUNCTION</scope>
    <scope>INTERACTION WITH STK36</scope>
</reference>
<reference key="6">
    <citation type="journal article" date="2010" name="Cell">
        <title>A tissue-specific atlas of mouse protein phosphorylation and expression.</title>
        <authorList>
            <person name="Huttlin E.L."/>
            <person name="Jedrychowski M.P."/>
            <person name="Elias J.E."/>
            <person name="Goswami T."/>
            <person name="Rad R."/>
            <person name="Beausoleil S.A."/>
            <person name="Villen J."/>
            <person name="Haas W."/>
            <person name="Sowa M.E."/>
            <person name="Gygi S.P."/>
        </authorList>
    </citation>
    <scope>IDENTIFICATION BY MASS SPECTROMETRY [LARGE SCALE ANALYSIS]</scope>
    <source>
        <tissue>Testis</tissue>
    </source>
</reference>
<reference key="7">
    <citation type="journal article" date="2016" name="Mol. Biol. Cell">
        <title>Intraflagellar transport protein IFT20 is essential for male fertility and spermiogenesis in mice.</title>
        <authorList>
            <person name="Zhang Z."/>
            <person name="Li W."/>
            <person name="Zhang Y."/>
            <person name="Zhang L."/>
            <person name="Teves M.E."/>
            <person name="Liu H."/>
            <person name="Strauss J.F. III"/>
            <person name="Pazour G.J."/>
            <person name="Foster J.A."/>
            <person name="Hess R.A."/>
            <person name="Zhang Z."/>
        </authorList>
    </citation>
    <scope>SUBCELLULAR LOCATION</scope>
    <scope>TISSUE SPECIFICITY</scope>
</reference>
<name>SPG16_MOUSE</name>
<gene>
    <name type="primary">Spag16</name>
    <name type="synonym">Pf20</name>
</gene>
<dbReference type="EMBL" id="AF490391">
    <property type="protein sequence ID" value="AAM97148.1"/>
    <property type="molecule type" value="mRNA"/>
</dbReference>
<dbReference type="EMBL" id="AK014865">
    <property type="protein sequence ID" value="BAB29591.1"/>
    <property type="molecule type" value="mRNA"/>
</dbReference>
<dbReference type="EMBL" id="AK015884">
    <property type="protein sequence ID" value="BAB30016.1"/>
    <property type="molecule type" value="mRNA"/>
</dbReference>
<dbReference type="EMBL" id="AK016618">
    <property type="protein sequence ID" value="BAB30341.1"/>
    <property type="molecule type" value="mRNA"/>
</dbReference>
<dbReference type="EMBL" id="AK083083">
    <property type="protein sequence ID" value="BAC38755.1"/>
    <property type="molecule type" value="mRNA"/>
</dbReference>
<dbReference type="EMBL" id="BC120668">
    <property type="protein sequence ID" value="AAI20669.1"/>
    <property type="molecule type" value="mRNA"/>
</dbReference>
<dbReference type="CCDS" id="CCDS15027.1">
    <molecule id="Q8K450-1"/>
</dbReference>
<dbReference type="CCDS" id="CCDS69901.1">
    <molecule id="Q8K450-3"/>
</dbReference>
<dbReference type="RefSeq" id="NP_001258462.1">
    <molecule id="Q8K450-3"/>
    <property type="nucleotide sequence ID" value="NM_001271533.1"/>
</dbReference>
<dbReference type="RefSeq" id="NP_080004.1">
    <molecule id="Q8K450-4"/>
    <property type="nucleotide sequence ID" value="NM_025728.4"/>
</dbReference>
<dbReference type="RefSeq" id="NP_083436.2">
    <molecule id="Q8K450-1"/>
    <property type="nucleotide sequence ID" value="NM_029160.3"/>
</dbReference>
<dbReference type="SMR" id="Q8K450"/>
<dbReference type="BioGRID" id="211672">
    <property type="interactions" value="2"/>
</dbReference>
<dbReference type="DIP" id="DIP-59752N"/>
<dbReference type="FunCoup" id="Q8K450">
    <property type="interactions" value="105"/>
</dbReference>
<dbReference type="IntAct" id="Q8K450">
    <property type="interactions" value="1"/>
</dbReference>
<dbReference type="STRING" id="10090.ENSMUSP00000069821"/>
<dbReference type="PhosphoSitePlus" id="Q8K450"/>
<dbReference type="SwissPalm" id="Q8K450"/>
<dbReference type="jPOST" id="Q8K450"/>
<dbReference type="PaxDb" id="10090-ENSMUSP00000069821"/>
<dbReference type="ProteomicsDB" id="257313">
    <molecule id="Q8K450-1"/>
</dbReference>
<dbReference type="ProteomicsDB" id="257314">
    <molecule id="Q8K450-2"/>
</dbReference>
<dbReference type="ProteomicsDB" id="257315">
    <molecule id="Q8K450-3"/>
</dbReference>
<dbReference type="ProteomicsDB" id="257316">
    <molecule id="Q8K450-4"/>
</dbReference>
<dbReference type="Antibodypedia" id="47659">
    <property type="antibodies" value="211 antibodies from 28 providers"/>
</dbReference>
<dbReference type="DNASU" id="66722"/>
<dbReference type="Ensembl" id="ENSMUST00000065425.12">
    <molecule id="Q8K450-1"/>
    <property type="protein sequence ID" value="ENSMUSP00000069821.6"/>
    <property type="gene ID" value="ENSMUSG00000053153.15"/>
</dbReference>
<dbReference type="Ensembl" id="ENSMUST00000113940.4">
    <molecule id="Q8K450-3"/>
    <property type="protein sequence ID" value="ENSMUSP00000109573.3"/>
    <property type="gene ID" value="ENSMUSG00000053153.15"/>
</dbReference>
<dbReference type="GeneID" id="66722"/>
<dbReference type="KEGG" id="mmu:66722"/>
<dbReference type="UCSC" id="uc007bjg.2">
    <molecule id="Q8K450-2"/>
    <property type="organism name" value="mouse"/>
</dbReference>
<dbReference type="UCSC" id="uc007bjh.2">
    <molecule id="Q8K450-1"/>
    <property type="organism name" value="mouse"/>
</dbReference>
<dbReference type="UCSC" id="uc007bji.2">
    <molecule id="Q8K450-4"/>
    <property type="organism name" value="mouse"/>
</dbReference>
<dbReference type="UCSC" id="uc033fjj.1">
    <molecule id="Q8K450-3"/>
    <property type="organism name" value="mouse"/>
</dbReference>
<dbReference type="AGR" id="MGI:1913972"/>
<dbReference type="CTD" id="79582"/>
<dbReference type="MGI" id="MGI:1913972">
    <property type="gene designation" value="Spag16"/>
</dbReference>
<dbReference type="VEuPathDB" id="HostDB:ENSMUSG00000053153"/>
<dbReference type="eggNOG" id="KOG0295">
    <property type="taxonomic scope" value="Eukaryota"/>
</dbReference>
<dbReference type="GeneTree" id="ENSGT00940000155053"/>
<dbReference type="HOGENOM" id="CLU_000288_57_18_1"/>
<dbReference type="InParanoid" id="Q8K450"/>
<dbReference type="OMA" id="VSDDETW"/>
<dbReference type="OrthoDB" id="538223at2759"/>
<dbReference type="PhylomeDB" id="Q8K450"/>
<dbReference type="TreeFam" id="TF351566"/>
<dbReference type="BioGRID-ORCS" id="66722">
    <property type="hits" value="2 hits in 78 CRISPR screens"/>
</dbReference>
<dbReference type="ChiTaRS" id="Spag16">
    <property type="organism name" value="mouse"/>
</dbReference>
<dbReference type="PRO" id="PR:Q8K450"/>
<dbReference type="Proteomes" id="UP000000589">
    <property type="component" value="Chromosome 1"/>
</dbReference>
<dbReference type="RNAct" id="Q8K450">
    <property type="molecule type" value="protein"/>
</dbReference>
<dbReference type="Bgee" id="ENSMUSG00000053153">
    <property type="expression patterns" value="Expressed in spermatid and 59 other cell types or tissues"/>
</dbReference>
<dbReference type="GO" id="GO:1990716">
    <property type="term" value="C:axonemal central apparatus"/>
    <property type="evidence" value="ECO:0000314"/>
    <property type="project" value="MGI"/>
</dbReference>
<dbReference type="GO" id="GO:0005930">
    <property type="term" value="C:axoneme"/>
    <property type="evidence" value="ECO:0000314"/>
    <property type="project" value="MGI"/>
</dbReference>
<dbReference type="GO" id="GO:0005737">
    <property type="term" value="C:cytoplasm"/>
    <property type="evidence" value="ECO:0000314"/>
    <property type="project" value="MGI"/>
</dbReference>
<dbReference type="GO" id="GO:0005576">
    <property type="term" value="C:extracellular region"/>
    <property type="evidence" value="ECO:0007669"/>
    <property type="project" value="GOC"/>
</dbReference>
<dbReference type="GO" id="GO:0001673">
    <property type="term" value="C:male germ cell nucleus"/>
    <property type="evidence" value="ECO:0000314"/>
    <property type="project" value="MGI"/>
</dbReference>
<dbReference type="GO" id="GO:0002177">
    <property type="term" value="C:manchette"/>
    <property type="evidence" value="ECO:0000314"/>
    <property type="project" value="MGI"/>
</dbReference>
<dbReference type="GO" id="GO:0036126">
    <property type="term" value="C:sperm flagellum"/>
    <property type="evidence" value="ECO:0000314"/>
    <property type="project" value="UniProtKB"/>
</dbReference>
<dbReference type="GO" id="GO:0019901">
    <property type="term" value="F:protein kinase binding"/>
    <property type="evidence" value="ECO:0000353"/>
    <property type="project" value="UniProtKB"/>
</dbReference>
<dbReference type="GO" id="GO:0097231">
    <property type="term" value="P:cell motility in response to calcium ion"/>
    <property type="evidence" value="ECO:0000315"/>
    <property type="project" value="MGI"/>
</dbReference>
<dbReference type="GO" id="GO:0090660">
    <property type="term" value="P:cerebrospinal fluid circulation"/>
    <property type="evidence" value="ECO:0000316"/>
    <property type="project" value="MGI"/>
</dbReference>
<dbReference type="GO" id="GO:0060271">
    <property type="term" value="P:cilium assembly"/>
    <property type="evidence" value="ECO:0000314"/>
    <property type="project" value="UniProtKB"/>
</dbReference>
<dbReference type="GO" id="GO:0060294">
    <property type="term" value="P:cilium movement involved in cell motility"/>
    <property type="evidence" value="ECO:0000315"/>
    <property type="project" value="MGI"/>
</dbReference>
<dbReference type="GO" id="GO:0051012">
    <property type="term" value="P:microtubule sliding"/>
    <property type="evidence" value="ECO:0000315"/>
    <property type="project" value="MGI"/>
</dbReference>
<dbReference type="GO" id="GO:0120197">
    <property type="term" value="P:mucociliary clearance"/>
    <property type="evidence" value="ECO:0000316"/>
    <property type="project" value="MGI"/>
</dbReference>
<dbReference type="GO" id="GO:0007288">
    <property type="term" value="P:sperm axoneme assembly"/>
    <property type="evidence" value="ECO:0000315"/>
    <property type="project" value="MGI"/>
</dbReference>
<dbReference type="CDD" id="cd00200">
    <property type="entry name" value="WD40"/>
    <property type="match status" value="1"/>
</dbReference>
<dbReference type="FunFam" id="2.130.10.10:FF:001241">
    <property type="entry name" value="Sperm-associated antigen 16 protein"/>
    <property type="match status" value="1"/>
</dbReference>
<dbReference type="FunFam" id="2.130.10.10:FF:000787">
    <property type="entry name" value="sperm-associated antigen 16 protein"/>
    <property type="match status" value="1"/>
</dbReference>
<dbReference type="Gene3D" id="2.130.10.10">
    <property type="entry name" value="YVTN repeat-like/Quinoprotein amine dehydrogenase"/>
    <property type="match status" value="2"/>
</dbReference>
<dbReference type="InterPro" id="IPR020472">
    <property type="entry name" value="G-protein_beta_WD-40_rep"/>
</dbReference>
<dbReference type="InterPro" id="IPR050995">
    <property type="entry name" value="WD-F-box_domain-protein"/>
</dbReference>
<dbReference type="InterPro" id="IPR015943">
    <property type="entry name" value="WD40/YVTN_repeat-like_dom_sf"/>
</dbReference>
<dbReference type="InterPro" id="IPR019775">
    <property type="entry name" value="WD40_repeat_CS"/>
</dbReference>
<dbReference type="InterPro" id="IPR036322">
    <property type="entry name" value="WD40_repeat_dom_sf"/>
</dbReference>
<dbReference type="InterPro" id="IPR001680">
    <property type="entry name" value="WD40_rpt"/>
</dbReference>
<dbReference type="PANTHER" id="PTHR14604:SF3">
    <property type="entry name" value="SPERM-ASSOCIATED ANTIGEN 16 PROTEIN"/>
    <property type="match status" value="1"/>
</dbReference>
<dbReference type="PANTHER" id="PTHR14604">
    <property type="entry name" value="WD40 REPEAT PF20"/>
    <property type="match status" value="1"/>
</dbReference>
<dbReference type="Pfam" id="PF00400">
    <property type="entry name" value="WD40"/>
    <property type="match status" value="6"/>
</dbReference>
<dbReference type="PRINTS" id="PR00320">
    <property type="entry name" value="GPROTEINBRPT"/>
</dbReference>
<dbReference type="SMART" id="SM00320">
    <property type="entry name" value="WD40"/>
    <property type="match status" value="7"/>
</dbReference>
<dbReference type="SUPFAM" id="SSF50978">
    <property type="entry name" value="WD40 repeat-like"/>
    <property type="match status" value="1"/>
</dbReference>
<dbReference type="PROSITE" id="PS00678">
    <property type="entry name" value="WD_REPEATS_1"/>
    <property type="match status" value="3"/>
</dbReference>
<dbReference type="PROSITE" id="PS50082">
    <property type="entry name" value="WD_REPEATS_2"/>
    <property type="match status" value="5"/>
</dbReference>
<dbReference type="PROSITE" id="PS50294">
    <property type="entry name" value="WD_REPEATS_REGION"/>
    <property type="match status" value="1"/>
</dbReference>
<organism>
    <name type="scientific">Mus musculus</name>
    <name type="common">Mouse</name>
    <dbReference type="NCBI Taxonomy" id="10090"/>
    <lineage>
        <taxon>Eukaryota</taxon>
        <taxon>Metazoa</taxon>
        <taxon>Chordata</taxon>
        <taxon>Craniata</taxon>
        <taxon>Vertebrata</taxon>
        <taxon>Euteleostomi</taxon>
        <taxon>Mammalia</taxon>
        <taxon>Eutheria</taxon>
        <taxon>Euarchontoglires</taxon>
        <taxon>Glires</taxon>
        <taxon>Rodentia</taxon>
        <taxon>Myomorpha</taxon>
        <taxon>Muroidea</taxon>
        <taxon>Muridae</taxon>
        <taxon>Murinae</taxon>
        <taxon>Mus</taxon>
        <taxon>Mus</taxon>
    </lineage>
</organism>
<accession>Q8K450</accession>
<accession>Q0VBE7</accession>
<accession>Q8C450</accession>
<accession>Q9CPU8</accession>
<accession>Q9D522</accession>
<keyword id="KW-0025">Alternative splicing</keyword>
<keyword id="KW-0966">Cell projection</keyword>
<keyword id="KW-0969">Cilium</keyword>
<keyword id="KW-0970">Cilium biogenesis/degradation</keyword>
<keyword id="KW-0175">Coiled coil</keyword>
<keyword id="KW-0963">Cytoplasm</keyword>
<keyword id="KW-0206">Cytoskeleton</keyword>
<keyword id="KW-0282">Flagellum</keyword>
<keyword id="KW-0597">Phosphoprotein</keyword>
<keyword id="KW-1185">Reference proteome</keyword>
<keyword id="KW-0677">Repeat</keyword>
<keyword id="KW-0853">WD repeat</keyword>
<evidence type="ECO:0000255" key="1"/>
<evidence type="ECO:0000256" key="2">
    <source>
        <dbReference type="SAM" id="MobiDB-lite"/>
    </source>
</evidence>
<evidence type="ECO:0000269" key="3">
    <source>
    </source>
</evidence>
<evidence type="ECO:0000269" key="4">
    <source>
    </source>
</evidence>
<evidence type="ECO:0000269" key="5">
    <source>
    </source>
</evidence>
<evidence type="ECO:0000303" key="6">
    <source>
    </source>
</evidence>
<evidence type="ECO:0000303" key="7">
    <source>
    </source>
</evidence>
<evidence type="ECO:0000305" key="8">
    <source>
    </source>
</evidence>
<feature type="chain" id="PRO_0000051224" description="Sperm-associated antigen 16 protein">
    <location>
        <begin position="1"/>
        <end position="639"/>
    </location>
</feature>
<feature type="repeat" description="WD 1">
    <location>
        <begin position="358"/>
        <end position="397"/>
    </location>
</feature>
<feature type="repeat" description="WD 2">
    <location>
        <begin position="400"/>
        <end position="439"/>
    </location>
</feature>
<feature type="repeat" description="WD 3">
    <location>
        <begin position="442"/>
        <end position="481"/>
    </location>
</feature>
<feature type="repeat" description="WD 4">
    <location>
        <begin position="484"/>
        <end position="523"/>
    </location>
</feature>
<feature type="repeat" description="WD 5">
    <location>
        <begin position="526"/>
        <end position="565"/>
    </location>
</feature>
<feature type="repeat" description="WD 6">
    <location>
        <begin position="568"/>
        <end position="608"/>
    </location>
</feature>
<feature type="repeat" description="WD 7">
    <location>
        <begin position="609"/>
        <end position="639"/>
    </location>
</feature>
<feature type="region of interest" description="Disordered" evidence="2">
    <location>
        <begin position="280"/>
        <end position="333"/>
    </location>
</feature>
<feature type="coiled-coil region" evidence="1">
    <location>
        <begin position="146"/>
        <end position="218"/>
    </location>
</feature>
<feature type="compositionally biased region" description="Basic and acidic residues" evidence="2">
    <location>
        <begin position="281"/>
        <end position="295"/>
    </location>
</feature>
<feature type="compositionally biased region" description="Basic and acidic residues" evidence="2">
    <location>
        <begin position="303"/>
        <end position="325"/>
    </location>
</feature>
<feature type="splice variant" id="VSP_013503" description="In isoform 4." evidence="7">
    <location>
        <begin position="1"/>
        <end position="329"/>
    </location>
</feature>
<feature type="splice variant" id="VSP_013504" description="In isoform 3." evidence="7">
    <original>DSEFPVDMQPDPNVTSCTENVSAAKFDYKLNNIFRLHELPVSCIVMHPCRDYLISCSEDRLWKMVGLPQGNVLLTGSGHTDW</original>
    <variation>PSSTESKRVQPSPTESHMVSSRSSSLYPTPSFHQQQSRGNFPTWNKITPQQGSISTREQSTGTLRKRPPKTSCLHQHESNGRF</variation>
    <location>
        <begin position="323"/>
        <end position="404"/>
    </location>
</feature>
<feature type="splice variant" id="VSP_013505" description="In isoform 3." evidence="7">
    <location>
        <begin position="405"/>
        <end position="639"/>
    </location>
</feature>
<feature type="splice variant" id="VSP_013507" description="In isoform 2." evidence="6 7">
    <original>GS</original>
    <variation>LT</variation>
    <location>
        <begin position="414"/>
        <end position="415"/>
    </location>
</feature>
<feature type="splice variant" id="VSP_013506" description="In isoform 2." evidence="6 7">
    <location>
        <begin position="416"/>
        <end position="639"/>
    </location>
</feature>
<sequence>MAAPSGVPPLRVLEELGIGLSPTGEVTEAVTSEGAYYLEQVTITETSEDECEYEEIPDDNFSIPEGEEDLEKAIHIIGEQARDIHILEQQTILPARNVMQEAIEDFLCNFLIKMGMTRTLDCFQAEWYELIQKKGSDFKGLGNVPDVYSQVMLLETENKNLKKELKHFKQAAEKAKEDLLRTQKERDFHRMHHKRIVQEKNKLIADLKGLKLHYASYEPTIRVLHEKHHALLKEKMLTSLERDRAVGKISGLQATLKNIDMGHIQVPVIKGSYESASITRESGDRAGHSCEKENSSEGPTQKSLREAREEVGYKSKLKNEKKDSEFPVDMQPDPNVTSCTENVSAAKFDYKLNNIFRLHELPVSCIVMHPCRDYLISCSEDRLWKMVGLPQGNVLLTGSGHTDWLSGCCFHPSGSKLATSSGDSTIKLWDLNKGECTLTLEGHNHAVWSCTWHSCGDFVASASLDMTSKIWDVNSERCRYTLYGHTDSVNSIEFFPFSNILLTASADKTLSVWDARTGKCEQSLYGHMHSVNDATFTPRGHIIASCDARGVTKLWDFRKLIPIVSIDVGPSSGNEVNFDQSGRVLAQASANGIIHLLDLKSGQIHKLVGHESEVHSVVFSHLGENLYSGGSDGTIRLWI</sequence>
<comment type="function">
    <text evidence="4">Necessary for sperm flagellar function. Plays a role in motile ciliogenesis. May help to recruit STK36 to the cilium or apical surface of the cell to initiate subsequent steps of construction of the central pair apparatus of motile cilia.</text>
</comment>
<comment type="subunit">
    <text evidence="3 4">Interacts with SPAG6 and STK36.</text>
</comment>
<comment type="subcellular location">
    <subcellularLocation>
        <location evidence="3">Cytoplasm</location>
    </subcellularLocation>
    <subcellularLocation>
        <location evidence="3">Cytoplasm</location>
        <location evidence="3">Cytoskeleton</location>
        <location evidence="3">Cilium axoneme</location>
    </subcellularLocation>
    <subcellularLocation>
        <location evidence="3">Cytoplasm</location>
        <location evidence="3">Cytoskeleton</location>
        <location evidence="3">Flagellum axoneme</location>
    </subcellularLocation>
    <subcellularLocation>
        <location evidence="3 5">Cell projection</location>
        <location evidence="3 5">Cilium</location>
        <location evidence="3 5">Flagellum</location>
    </subcellularLocation>
    <text evidence="3 5">Detected on the sperm flagellum. Detected in the central apparatus of the axoneme. Colocalizes with SPAG6 on microtubules.</text>
</comment>
<comment type="alternative products">
    <event type="alternative splicing"/>
    <isoform>
        <id>Q8K450-1</id>
        <name>1</name>
        <name>SPAG16L</name>
        <sequence type="displayed"/>
    </isoform>
    <isoform>
        <id>Q8K450-2</id>
        <name>2</name>
        <sequence type="described" ref="VSP_013507 VSP_013506"/>
    </isoform>
    <isoform>
        <id>Q8K450-3</id>
        <name>3</name>
        <sequence type="described" ref="VSP_013504 VSP_013505"/>
    </isoform>
    <isoform>
        <id>Q8K450-4</id>
        <name>4</name>
        <name>SPAG16S</name>
        <sequence type="described" ref="VSP_013503"/>
    </isoform>
</comment>
<comment type="tissue specificity">
    <text evidence="3 5">Expressed in testis.</text>
</comment>
<comment type="PTM">
    <text evidence="8">Phosphorylated by TSSK2.</text>
</comment>
<protein>
    <recommendedName>
        <fullName>Sperm-associated antigen 16 protein</fullName>
    </recommendedName>
    <alternativeName>
        <fullName>Pf20 protein homolog</fullName>
    </alternativeName>
</protein>